<feature type="chain" id="PRO_1000200851" description="23S rRNA (uracil(1939)-C(5))-methyltransferase RlmD">
    <location>
        <begin position="1"/>
        <end position="445"/>
    </location>
</feature>
<feature type="domain" description="TRAM" evidence="1">
    <location>
        <begin position="12"/>
        <end position="70"/>
    </location>
</feature>
<feature type="active site" description="Nucleophile" evidence="1">
    <location>
        <position position="401"/>
    </location>
</feature>
<feature type="binding site" evidence="1">
    <location>
        <position position="83"/>
    </location>
    <ligand>
        <name>[4Fe-4S] cluster</name>
        <dbReference type="ChEBI" id="CHEBI:49883"/>
    </ligand>
</feature>
<feature type="binding site" evidence="1">
    <location>
        <position position="89"/>
    </location>
    <ligand>
        <name>[4Fe-4S] cluster</name>
        <dbReference type="ChEBI" id="CHEBI:49883"/>
    </ligand>
</feature>
<feature type="binding site" evidence="1">
    <location>
        <position position="92"/>
    </location>
    <ligand>
        <name>[4Fe-4S] cluster</name>
        <dbReference type="ChEBI" id="CHEBI:49883"/>
    </ligand>
</feature>
<feature type="binding site" evidence="1">
    <location>
        <position position="171"/>
    </location>
    <ligand>
        <name>[4Fe-4S] cluster</name>
        <dbReference type="ChEBI" id="CHEBI:49883"/>
    </ligand>
</feature>
<feature type="binding site" evidence="1">
    <location>
        <position position="278"/>
    </location>
    <ligand>
        <name>S-adenosyl-L-methionine</name>
        <dbReference type="ChEBI" id="CHEBI:59789"/>
    </ligand>
</feature>
<feature type="binding site" evidence="1">
    <location>
        <position position="307"/>
    </location>
    <ligand>
        <name>S-adenosyl-L-methionine</name>
        <dbReference type="ChEBI" id="CHEBI:59789"/>
    </ligand>
</feature>
<feature type="binding site" evidence="1">
    <location>
        <position position="312"/>
    </location>
    <ligand>
        <name>S-adenosyl-L-methionine</name>
        <dbReference type="ChEBI" id="CHEBI:59789"/>
    </ligand>
</feature>
<feature type="binding site" evidence="1">
    <location>
        <position position="328"/>
    </location>
    <ligand>
        <name>S-adenosyl-L-methionine</name>
        <dbReference type="ChEBI" id="CHEBI:59789"/>
    </ligand>
</feature>
<feature type="binding site" evidence="1">
    <location>
        <position position="355"/>
    </location>
    <ligand>
        <name>S-adenosyl-L-methionine</name>
        <dbReference type="ChEBI" id="CHEBI:59789"/>
    </ligand>
</feature>
<feature type="binding site" evidence="1">
    <location>
        <position position="375"/>
    </location>
    <ligand>
        <name>S-adenosyl-L-methionine</name>
        <dbReference type="ChEBI" id="CHEBI:59789"/>
    </ligand>
</feature>
<keyword id="KW-0004">4Fe-4S</keyword>
<keyword id="KW-0408">Iron</keyword>
<keyword id="KW-0411">Iron-sulfur</keyword>
<keyword id="KW-0479">Metal-binding</keyword>
<keyword id="KW-0489">Methyltransferase</keyword>
<keyword id="KW-0698">rRNA processing</keyword>
<keyword id="KW-0949">S-adenosyl-L-methionine</keyword>
<keyword id="KW-0808">Transferase</keyword>
<proteinExistence type="inferred from homology"/>
<organism>
    <name type="scientific">Shewanella halifaxensis (strain HAW-EB4)</name>
    <dbReference type="NCBI Taxonomy" id="458817"/>
    <lineage>
        <taxon>Bacteria</taxon>
        <taxon>Pseudomonadati</taxon>
        <taxon>Pseudomonadota</taxon>
        <taxon>Gammaproteobacteria</taxon>
        <taxon>Alteromonadales</taxon>
        <taxon>Shewanellaceae</taxon>
        <taxon>Shewanella</taxon>
    </lineage>
</organism>
<evidence type="ECO:0000255" key="1">
    <source>
        <dbReference type="HAMAP-Rule" id="MF_01010"/>
    </source>
</evidence>
<sequence length="445" mass="48989">MAQFFKAKPNTSKQLSSKLSLKVTQLDHLGAGIAHHDGKIVFINGALPGETVSVQLTEQKKKFARAKLLKIDKASAQRVSPLCPHFDKCGGCDLQHLDIDAQRKHKASTLVDLVNKFAQTQAGEVCDTLSDNAWHYRRRARLATWFDKNTKHISLGFRASSSSDVVEIQSCAVLAEPLSALIPDLAFMLNQLSGKKALGHVELTQADNGNFVVLRVTKALSDKDKARLVEFANKHQVIVLLQDDDAQCEHLNGAGEQPYYGFDDNQVKLNFSPGNFIQVNAQVNQAMVSQAVEWLSPKADERVLDLFCGIGNFSLPLAKDGAEVIGVEGVQAMVEQARINAKQSGLDKVSFYHADLSADLSKEPWLGKVDKMLIDPARAGAYESMQSLKKLKPKALVYVSCNPASLARDSEVILKQGYQLKKIGLVDMFPQTHHLESMALFELKN</sequence>
<dbReference type="EC" id="2.1.1.190" evidence="1"/>
<dbReference type="EMBL" id="CP000931">
    <property type="protein sequence ID" value="ABZ75787.1"/>
    <property type="molecule type" value="Genomic_DNA"/>
</dbReference>
<dbReference type="RefSeq" id="WP_012276329.1">
    <property type="nucleotide sequence ID" value="NC_010334.1"/>
</dbReference>
<dbReference type="SMR" id="B0TK00"/>
<dbReference type="STRING" id="458817.Shal_1218"/>
<dbReference type="KEGG" id="shl:Shal_1218"/>
<dbReference type="eggNOG" id="COG2265">
    <property type="taxonomic scope" value="Bacteria"/>
</dbReference>
<dbReference type="HOGENOM" id="CLU_014689_8_2_6"/>
<dbReference type="OrthoDB" id="9804590at2"/>
<dbReference type="Proteomes" id="UP000001317">
    <property type="component" value="Chromosome"/>
</dbReference>
<dbReference type="GO" id="GO:0051539">
    <property type="term" value="F:4 iron, 4 sulfur cluster binding"/>
    <property type="evidence" value="ECO:0007669"/>
    <property type="project" value="UniProtKB-KW"/>
</dbReference>
<dbReference type="GO" id="GO:0005506">
    <property type="term" value="F:iron ion binding"/>
    <property type="evidence" value="ECO:0007669"/>
    <property type="project" value="UniProtKB-UniRule"/>
</dbReference>
<dbReference type="GO" id="GO:0003723">
    <property type="term" value="F:RNA binding"/>
    <property type="evidence" value="ECO:0007669"/>
    <property type="project" value="InterPro"/>
</dbReference>
<dbReference type="GO" id="GO:0070041">
    <property type="term" value="F:rRNA (uridine-C5-)-methyltransferase activity"/>
    <property type="evidence" value="ECO:0007669"/>
    <property type="project" value="UniProtKB-UniRule"/>
</dbReference>
<dbReference type="GO" id="GO:0070475">
    <property type="term" value="P:rRNA base methylation"/>
    <property type="evidence" value="ECO:0007669"/>
    <property type="project" value="TreeGrafter"/>
</dbReference>
<dbReference type="CDD" id="cd02440">
    <property type="entry name" value="AdoMet_MTases"/>
    <property type="match status" value="1"/>
</dbReference>
<dbReference type="FunFam" id="3.40.50.150:FF:000009">
    <property type="entry name" value="23S rRNA (Uracil(1939)-C(5))-methyltransferase RlmD"/>
    <property type="match status" value="1"/>
</dbReference>
<dbReference type="FunFam" id="2.40.50.140:FF:000097">
    <property type="entry name" value="23S rRNA (uracil(1939)-C(5))-methyltransferase RlmD"/>
    <property type="match status" value="1"/>
</dbReference>
<dbReference type="Gene3D" id="2.40.50.1070">
    <property type="match status" value="1"/>
</dbReference>
<dbReference type="Gene3D" id="2.40.50.140">
    <property type="entry name" value="Nucleic acid-binding proteins"/>
    <property type="match status" value="1"/>
</dbReference>
<dbReference type="Gene3D" id="3.40.50.150">
    <property type="entry name" value="Vaccinia Virus protein VP39"/>
    <property type="match status" value="1"/>
</dbReference>
<dbReference type="HAMAP" id="MF_01010">
    <property type="entry name" value="23SrRNA_methyltr_RlmD"/>
    <property type="match status" value="1"/>
</dbReference>
<dbReference type="InterPro" id="IPR001566">
    <property type="entry name" value="23S_rRNA_MeTrfase_RlmD"/>
</dbReference>
<dbReference type="InterPro" id="IPR030390">
    <property type="entry name" value="MeTrfase_TrmA_AS"/>
</dbReference>
<dbReference type="InterPro" id="IPR030391">
    <property type="entry name" value="MeTrfase_TrmA_CS"/>
</dbReference>
<dbReference type="InterPro" id="IPR012340">
    <property type="entry name" value="NA-bd_OB-fold"/>
</dbReference>
<dbReference type="InterPro" id="IPR029063">
    <property type="entry name" value="SAM-dependent_MTases_sf"/>
</dbReference>
<dbReference type="InterPro" id="IPR002792">
    <property type="entry name" value="TRAM_dom"/>
</dbReference>
<dbReference type="InterPro" id="IPR010280">
    <property type="entry name" value="U5_MeTrfase_fam"/>
</dbReference>
<dbReference type="NCBIfam" id="NF009639">
    <property type="entry name" value="PRK13168.1"/>
    <property type="match status" value="1"/>
</dbReference>
<dbReference type="NCBIfam" id="TIGR00479">
    <property type="entry name" value="rumA"/>
    <property type="match status" value="1"/>
</dbReference>
<dbReference type="PANTHER" id="PTHR11061:SF49">
    <property type="entry name" value="23S RRNA (URACIL(1939)-C(5))-METHYLTRANSFERASE RLMD"/>
    <property type="match status" value="1"/>
</dbReference>
<dbReference type="PANTHER" id="PTHR11061">
    <property type="entry name" value="RNA M5U METHYLTRANSFERASE"/>
    <property type="match status" value="1"/>
</dbReference>
<dbReference type="Pfam" id="PF01938">
    <property type="entry name" value="TRAM"/>
    <property type="match status" value="1"/>
</dbReference>
<dbReference type="Pfam" id="PF05958">
    <property type="entry name" value="tRNA_U5-meth_tr"/>
    <property type="match status" value="1"/>
</dbReference>
<dbReference type="SUPFAM" id="SSF50249">
    <property type="entry name" value="Nucleic acid-binding proteins"/>
    <property type="match status" value="1"/>
</dbReference>
<dbReference type="SUPFAM" id="SSF53335">
    <property type="entry name" value="S-adenosyl-L-methionine-dependent methyltransferases"/>
    <property type="match status" value="1"/>
</dbReference>
<dbReference type="PROSITE" id="PS51687">
    <property type="entry name" value="SAM_MT_RNA_M5U"/>
    <property type="match status" value="1"/>
</dbReference>
<dbReference type="PROSITE" id="PS50926">
    <property type="entry name" value="TRAM"/>
    <property type="match status" value="1"/>
</dbReference>
<dbReference type="PROSITE" id="PS01230">
    <property type="entry name" value="TRMA_1"/>
    <property type="match status" value="1"/>
</dbReference>
<dbReference type="PROSITE" id="PS01231">
    <property type="entry name" value="TRMA_2"/>
    <property type="match status" value="1"/>
</dbReference>
<name>RLMD_SHEHH</name>
<protein>
    <recommendedName>
        <fullName evidence="1">23S rRNA (uracil(1939)-C(5))-methyltransferase RlmD</fullName>
        <ecNumber evidence="1">2.1.1.190</ecNumber>
    </recommendedName>
    <alternativeName>
        <fullName evidence="1">23S rRNA(m5U1939)-methyltransferase</fullName>
    </alternativeName>
</protein>
<reference key="1">
    <citation type="submission" date="2008-01" db="EMBL/GenBank/DDBJ databases">
        <title>Complete sequence of Shewanella halifaxensis HAW-EB4.</title>
        <authorList>
            <consortium name="US DOE Joint Genome Institute"/>
            <person name="Copeland A."/>
            <person name="Lucas S."/>
            <person name="Lapidus A."/>
            <person name="Glavina del Rio T."/>
            <person name="Dalin E."/>
            <person name="Tice H."/>
            <person name="Bruce D."/>
            <person name="Goodwin L."/>
            <person name="Pitluck S."/>
            <person name="Sims D."/>
            <person name="Brettin T."/>
            <person name="Detter J.C."/>
            <person name="Han C."/>
            <person name="Kuske C.R."/>
            <person name="Schmutz J."/>
            <person name="Larimer F."/>
            <person name="Land M."/>
            <person name="Hauser L."/>
            <person name="Kyrpides N."/>
            <person name="Kim E."/>
            <person name="Zhao J.-S."/>
            <person name="Richardson P."/>
        </authorList>
    </citation>
    <scope>NUCLEOTIDE SEQUENCE [LARGE SCALE GENOMIC DNA]</scope>
    <source>
        <strain>HAW-EB4</strain>
    </source>
</reference>
<comment type="function">
    <text evidence="1">Catalyzes the formation of 5-methyl-uridine at position 1939 (m5U1939) in 23S rRNA.</text>
</comment>
<comment type="catalytic activity">
    <reaction evidence="1">
        <text>uridine(1939) in 23S rRNA + S-adenosyl-L-methionine = 5-methyluridine(1939) in 23S rRNA + S-adenosyl-L-homocysteine + H(+)</text>
        <dbReference type="Rhea" id="RHEA:42908"/>
        <dbReference type="Rhea" id="RHEA-COMP:10278"/>
        <dbReference type="Rhea" id="RHEA-COMP:10279"/>
        <dbReference type="ChEBI" id="CHEBI:15378"/>
        <dbReference type="ChEBI" id="CHEBI:57856"/>
        <dbReference type="ChEBI" id="CHEBI:59789"/>
        <dbReference type="ChEBI" id="CHEBI:65315"/>
        <dbReference type="ChEBI" id="CHEBI:74447"/>
        <dbReference type="EC" id="2.1.1.190"/>
    </reaction>
</comment>
<comment type="similarity">
    <text evidence="1">Belongs to the class I-like SAM-binding methyltransferase superfamily. RNA M5U methyltransferase family. RlmD subfamily.</text>
</comment>
<accession>B0TK00</accession>
<gene>
    <name evidence="1" type="primary">rlmD</name>
    <name type="synonym">rumA</name>
    <name type="ordered locus">Shal_1218</name>
</gene>